<accession>P94605</accession>
<comment type="function">
    <text evidence="1">A type II topoisomerase that negatively supercoils closed circular double-stranded (ds) DNA in an ATP-dependent manner to modulate DNA topology and maintain chromosomes in an underwound state. Negative supercoiling favors strand separation, and DNA replication, transcription, recombination and repair, all of which involve strand separation. Also able to catalyze the interconversion of other topological isomers of dsDNA rings, including catenanes and knotted rings. Type II topoisomerases break and join 2 DNA strands simultaneously in an ATP-dependent manner.</text>
</comment>
<comment type="catalytic activity">
    <reaction evidence="1">
        <text>ATP-dependent breakage, passage and rejoining of double-stranded DNA.</text>
        <dbReference type="EC" id="5.6.2.2"/>
    </reaction>
</comment>
<comment type="subunit">
    <text evidence="1">Heterotetramer, composed of two GyrA and two GyrB chains. In the heterotetramer, GyrA contains the active site tyrosine that forms a transient covalent intermediate with DNA, while GyrB binds cofactors and catalyzes ATP hydrolysis.</text>
</comment>
<comment type="subcellular location">
    <subcellularLocation>
        <location evidence="1">Cytoplasm</location>
    </subcellularLocation>
</comment>
<comment type="miscellaneous">
    <text evidence="1">Few gyrases are as efficient as E.coli at forming negative supercoils. Not all organisms have 2 type II topoisomerases; in organisms with a single type II topoisomerase this enzyme also has to decatenate newly replicated chromosomes.</text>
</comment>
<comment type="similarity">
    <text evidence="1">Belongs to the type II topoisomerase GyrA/ParC subunit family.</text>
</comment>
<evidence type="ECO:0000255" key="1">
    <source>
        <dbReference type="HAMAP-Rule" id="MF_01897"/>
    </source>
</evidence>
<evidence type="ECO:0000255" key="2">
    <source>
        <dbReference type="PROSITE-ProRule" id="PRU01384"/>
    </source>
</evidence>
<evidence type="ECO:0000256" key="3">
    <source>
        <dbReference type="SAM" id="MobiDB-lite"/>
    </source>
</evidence>
<evidence type="ECO:0000305" key="4"/>
<protein>
    <recommendedName>
        <fullName evidence="1">DNA gyrase subunit A</fullName>
        <ecNumber evidence="1">5.6.2.2</ecNumber>
    </recommendedName>
</protein>
<name>GYRA_CLOAB</name>
<sequence length="830" mass="92612">MLNEGKVLPVDISSEMKKCYIDYAMSVIVSRALPDVRDGLKPVHRRILYSMHELGLTPEKGYRKCARIVGDVLGKYHPHGDSSVYGALVRLAQDFNLRYTVVDGHGNFGSVDGDSAAAMRYTEAKMNKIALEMVRDIGKNTVDFIPNFDGEEKEPVVLPSRFPNLLVNGSAGIAVGMATNIPPHNLGEVIDGITMLIDNPEATILELMAQIKGPDFPTAGIIMGKSGIRAAYETGRGKITVRAKSEIEVEDNGKQKIIITEIPYQVNKARLVESIADLVKDKRIVGISDLRDESDRDGMRIVIEIKKDANSNIILNQLYKHTRLQDTFGINMLALVDNRPEVLNLKQILQHYIKFQEQVIRRRTEFDLEKASARAHILEGLKIALDHIDEVISLIRGSKTAQEAKLGLMDKFGLSEKQAQAILDLKLQRLTGLEREKIEDEYNELMKTIAELKSILADENKILAIIRDELNEIKAKYGDERKTAIERAENDIDIEDLIQEENVVITLTHAGYIKRINADTYTSQKRGGRGIQAMTTKEDDFVENIFITSTHNNILFFTNKGRMYKLKAYQIPEAGRAAKGTNVVNLLQLDPNEKIQAVISIKEFDEESFLVMCTKKGIIKKTVVGMYKNIRKSGLIAINLNDDDELVSVRITKGDDDIIIVTNKGLAIRFNEVDVRPLGRNALGVKGITLKEDDFVVGMEVPNQESDVLVVSENGFGKRTHVGEYKCQHRGGKGLITYKVSDKTGKLVGVRMVEDGDELMLINNLGIAIRINVSDISTTSRNAMGVTLMRNNGDEKVLALAKINKDDSEQLEDSEEVSEVHDAEENNSEE</sequence>
<feature type="chain" id="PRO_0000145231" description="DNA gyrase subunit A">
    <location>
        <begin position="1"/>
        <end position="830"/>
    </location>
</feature>
<feature type="domain" description="Topo IIA-type catalytic" evidence="2">
    <location>
        <begin position="33"/>
        <end position="497"/>
    </location>
</feature>
<feature type="region of interest" description="Disordered" evidence="3">
    <location>
        <begin position="805"/>
        <end position="830"/>
    </location>
</feature>
<feature type="short sequence motif" description="GyrA-box" evidence="1">
    <location>
        <begin position="524"/>
        <end position="530"/>
    </location>
</feature>
<feature type="active site" description="O-(5'-phospho-DNA)-tyrosine intermediate" evidence="1">
    <location>
        <position position="121"/>
    </location>
</feature>
<feature type="sequence conflict" description="In Ref. 1; AAB41131." evidence="4" ref="1">
    <original>GIA</original>
    <variation>HS</variation>
    <location>
        <begin position="766"/>
        <end position="768"/>
    </location>
</feature>
<dbReference type="EC" id="5.6.2.2" evidence="1"/>
<dbReference type="EMBL" id="U35453">
    <property type="protein sequence ID" value="AAB41131.1"/>
    <property type="molecule type" value="Genomic_DNA"/>
</dbReference>
<dbReference type="EMBL" id="AE001437">
    <property type="protein sequence ID" value="AAK77994.1"/>
    <property type="molecule type" value="Genomic_DNA"/>
</dbReference>
<dbReference type="PIR" id="G96900">
    <property type="entry name" value="G96900"/>
</dbReference>
<dbReference type="PIR" id="T46556">
    <property type="entry name" value="T46556"/>
</dbReference>
<dbReference type="RefSeq" id="NP_346654.1">
    <property type="nucleotide sequence ID" value="NC_003030.1"/>
</dbReference>
<dbReference type="RefSeq" id="WP_010963336.1">
    <property type="nucleotide sequence ID" value="NC_003030.1"/>
</dbReference>
<dbReference type="SMR" id="P94605"/>
<dbReference type="STRING" id="272562.CA_C0007"/>
<dbReference type="GeneID" id="44996480"/>
<dbReference type="KEGG" id="cac:CA_C0007"/>
<dbReference type="PATRIC" id="fig|272562.8.peg.186"/>
<dbReference type="eggNOG" id="COG0188">
    <property type="taxonomic scope" value="Bacteria"/>
</dbReference>
<dbReference type="HOGENOM" id="CLU_002977_6_1_9"/>
<dbReference type="OrthoDB" id="9806486at2"/>
<dbReference type="Proteomes" id="UP000000814">
    <property type="component" value="Chromosome"/>
</dbReference>
<dbReference type="GO" id="GO:0005694">
    <property type="term" value="C:chromosome"/>
    <property type="evidence" value="ECO:0007669"/>
    <property type="project" value="InterPro"/>
</dbReference>
<dbReference type="GO" id="GO:0005737">
    <property type="term" value="C:cytoplasm"/>
    <property type="evidence" value="ECO:0007669"/>
    <property type="project" value="UniProtKB-SubCell"/>
</dbReference>
<dbReference type="GO" id="GO:0009330">
    <property type="term" value="C:DNA topoisomerase type II (double strand cut, ATP-hydrolyzing) complex"/>
    <property type="evidence" value="ECO:0007669"/>
    <property type="project" value="TreeGrafter"/>
</dbReference>
<dbReference type="GO" id="GO:0005524">
    <property type="term" value="F:ATP binding"/>
    <property type="evidence" value="ECO:0007669"/>
    <property type="project" value="UniProtKB-UniRule"/>
</dbReference>
<dbReference type="GO" id="GO:0003677">
    <property type="term" value="F:DNA binding"/>
    <property type="evidence" value="ECO:0007669"/>
    <property type="project" value="UniProtKB-UniRule"/>
</dbReference>
<dbReference type="GO" id="GO:0034335">
    <property type="term" value="F:DNA negative supercoiling activity"/>
    <property type="evidence" value="ECO:0007669"/>
    <property type="project" value="UniProtKB-ARBA"/>
</dbReference>
<dbReference type="GO" id="GO:0006265">
    <property type="term" value="P:DNA topological change"/>
    <property type="evidence" value="ECO:0007669"/>
    <property type="project" value="UniProtKB-UniRule"/>
</dbReference>
<dbReference type="GO" id="GO:0006261">
    <property type="term" value="P:DNA-templated DNA replication"/>
    <property type="evidence" value="ECO:0007669"/>
    <property type="project" value="UniProtKB-UniRule"/>
</dbReference>
<dbReference type="CDD" id="cd00187">
    <property type="entry name" value="TOP4c"/>
    <property type="match status" value="1"/>
</dbReference>
<dbReference type="FunFam" id="1.10.268.10:FF:000001">
    <property type="entry name" value="DNA gyrase subunit A"/>
    <property type="match status" value="1"/>
</dbReference>
<dbReference type="FunFam" id="2.120.10.90:FF:000004">
    <property type="entry name" value="DNA gyrase subunit A"/>
    <property type="match status" value="1"/>
</dbReference>
<dbReference type="FunFam" id="3.30.1360.40:FF:000002">
    <property type="entry name" value="DNA gyrase subunit A"/>
    <property type="match status" value="1"/>
</dbReference>
<dbReference type="FunFam" id="3.90.199.10:FF:000001">
    <property type="entry name" value="DNA gyrase subunit A"/>
    <property type="match status" value="1"/>
</dbReference>
<dbReference type="Gene3D" id="3.30.1360.40">
    <property type="match status" value="1"/>
</dbReference>
<dbReference type="Gene3D" id="2.120.10.90">
    <property type="entry name" value="DNA gyrase/topoisomerase IV, subunit A, C-terminal"/>
    <property type="match status" value="1"/>
</dbReference>
<dbReference type="Gene3D" id="3.90.199.10">
    <property type="entry name" value="Topoisomerase II, domain 5"/>
    <property type="match status" value="1"/>
</dbReference>
<dbReference type="Gene3D" id="1.10.268.10">
    <property type="entry name" value="Topoisomerase, domain 3"/>
    <property type="match status" value="1"/>
</dbReference>
<dbReference type="HAMAP" id="MF_01897">
    <property type="entry name" value="GyrA"/>
    <property type="match status" value="1"/>
</dbReference>
<dbReference type="InterPro" id="IPR005743">
    <property type="entry name" value="GyrA"/>
</dbReference>
<dbReference type="InterPro" id="IPR006691">
    <property type="entry name" value="GyrA/parC_rep"/>
</dbReference>
<dbReference type="InterPro" id="IPR035516">
    <property type="entry name" value="Gyrase/topoIV_suA_C"/>
</dbReference>
<dbReference type="InterPro" id="IPR013760">
    <property type="entry name" value="Topo_IIA-like_dom_sf"/>
</dbReference>
<dbReference type="InterPro" id="IPR013758">
    <property type="entry name" value="Topo_IIA_A/C_ab"/>
</dbReference>
<dbReference type="InterPro" id="IPR013757">
    <property type="entry name" value="Topo_IIA_A_a_sf"/>
</dbReference>
<dbReference type="InterPro" id="IPR002205">
    <property type="entry name" value="Topo_IIA_dom_A"/>
</dbReference>
<dbReference type="InterPro" id="IPR050220">
    <property type="entry name" value="Type_II_DNA_Topoisomerases"/>
</dbReference>
<dbReference type="NCBIfam" id="TIGR01063">
    <property type="entry name" value="gyrA"/>
    <property type="match status" value="1"/>
</dbReference>
<dbReference type="NCBIfam" id="NF004043">
    <property type="entry name" value="PRK05560.1"/>
    <property type="match status" value="1"/>
</dbReference>
<dbReference type="NCBIfam" id="NF004044">
    <property type="entry name" value="PRK05561.1"/>
    <property type="match status" value="1"/>
</dbReference>
<dbReference type="PANTHER" id="PTHR43493:SF5">
    <property type="entry name" value="DNA GYRASE SUBUNIT A, CHLOROPLASTIC_MITOCHONDRIAL"/>
    <property type="match status" value="1"/>
</dbReference>
<dbReference type="PANTHER" id="PTHR43493">
    <property type="entry name" value="DNA GYRASE/TOPOISOMERASE SUBUNIT A"/>
    <property type="match status" value="1"/>
</dbReference>
<dbReference type="Pfam" id="PF03989">
    <property type="entry name" value="DNA_gyraseA_C"/>
    <property type="match status" value="6"/>
</dbReference>
<dbReference type="Pfam" id="PF00521">
    <property type="entry name" value="DNA_topoisoIV"/>
    <property type="match status" value="1"/>
</dbReference>
<dbReference type="SMART" id="SM00434">
    <property type="entry name" value="TOP4c"/>
    <property type="match status" value="1"/>
</dbReference>
<dbReference type="SUPFAM" id="SSF101904">
    <property type="entry name" value="GyrA/ParC C-terminal domain-like"/>
    <property type="match status" value="1"/>
</dbReference>
<dbReference type="SUPFAM" id="SSF56719">
    <property type="entry name" value="Type II DNA topoisomerase"/>
    <property type="match status" value="1"/>
</dbReference>
<dbReference type="PROSITE" id="PS52040">
    <property type="entry name" value="TOPO_IIA"/>
    <property type="match status" value="1"/>
</dbReference>
<proteinExistence type="inferred from homology"/>
<gene>
    <name evidence="1" type="primary">gyrA</name>
    <name type="ordered locus">CA_C0007</name>
</gene>
<organism>
    <name type="scientific">Clostridium acetobutylicum (strain ATCC 824 / DSM 792 / JCM 1419 / IAM 19013 / LMG 5710 / NBRC 13948 / NRRL B-527 / VKM B-1787 / 2291 / W)</name>
    <dbReference type="NCBI Taxonomy" id="272562"/>
    <lineage>
        <taxon>Bacteria</taxon>
        <taxon>Bacillati</taxon>
        <taxon>Bacillota</taxon>
        <taxon>Clostridia</taxon>
        <taxon>Eubacteriales</taxon>
        <taxon>Clostridiaceae</taxon>
        <taxon>Clostridium</taxon>
    </lineage>
</organism>
<keyword id="KW-0067">ATP-binding</keyword>
<keyword id="KW-0963">Cytoplasm</keyword>
<keyword id="KW-0238">DNA-binding</keyword>
<keyword id="KW-0413">Isomerase</keyword>
<keyword id="KW-0547">Nucleotide-binding</keyword>
<keyword id="KW-1185">Reference proteome</keyword>
<keyword id="KW-0799">Topoisomerase</keyword>
<reference key="1">
    <citation type="journal article" date="1996" name="Anaerobe">
        <title>Nucleotide sequence and molecular characterization of the DNA gyrase genes from Clostridium acetobutylicum.</title>
        <authorList>
            <person name="Ullmann S."/>
            <person name="Duerre P."/>
        </authorList>
    </citation>
    <scope>NUCLEOTIDE SEQUENCE [GENOMIC DNA]</scope>
    <source>
        <strain>ATCC 824 / DSM 792 / JCM 1419 / IAM 19013 / LMG 5710 / NBRC 13948 / NRRL B-527 / VKM B-1787 / 2291 / W</strain>
    </source>
</reference>
<reference key="2">
    <citation type="journal article" date="2001" name="J. Bacteriol.">
        <title>Genome sequence and comparative analysis of the solvent-producing bacterium Clostridium acetobutylicum.</title>
        <authorList>
            <person name="Noelling J."/>
            <person name="Breton G."/>
            <person name="Omelchenko M.V."/>
            <person name="Makarova K.S."/>
            <person name="Zeng Q."/>
            <person name="Gibson R."/>
            <person name="Lee H.M."/>
            <person name="Dubois J."/>
            <person name="Qiu D."/>
            <person name="Hitti J."/>
            <person name="Wolf Y.I."/>
            <person name="Tatusov R.L."/>
            <person name="Sabathe F."/>
            <person name="Doucette-Stamm L.A."/>
            <person name="Soucaille P."/>
            <person name="Daly M.J."/>
            <person name="Bennett G.N."/>
            <person name="Koonin E.V."/>
            <person name="Smith D.R."/>
        </authorList>
    </citation>
    <scope>NUCLEOTIDE SEQUENCE [LARGE SCALE GENOMIC DNA]</scope>
    <source>
        <strain>ATCC 824 / DSM 792 / JCM 1419 / IAM 19013 / LMG 5710 / NBRC 13948 / NRRL B-527 / VKM B-1787 / 2291 / W</strain>
    </source>
</reference>